<name>EFTU_RHDSA</name>
<sequence>MAREKFERSKPHVNIGTIGHVDHGKTTLTAAISTVLAANSSGPGKKFDEIDSAPEERARGITINTAHVEYETAARHYAHVDCPGHADYVKNMITGAAQMDGAILVCSAADGPMPQTREHILLAKQVGVPHIVVFLNKADMVDDEELLELVELEVQELLSKYDFPGDEIPFVAGSALLALETAVGKPDIGRGEDKWVDTIFELMDKIDEYIPTPERETDKSFLMAVEDVFSITGRGTVATGRIERGQVKVGDTIEIIGLRETRTTTITGLEMFQKSLEEALAGDNVGILVRGIQKTDIERGMVLAAPGSITPHTKFEGEVYVLTKEEGGRHTPFFTGYRPQFYVRTTDVTGTIAQFTADDGSAAEMVMPGDRIKMTAQLIHPIAIEKGMRFAIREGGRTVGAGVVSKILE</sequence>
<dbReference type="EC" id="3.6.5.3" evidence="2"/>
<dbReference type="EMBL" id="EF508371">
    <property type="protein sequence ID" value="ABO70791.1"/>
    <property type="molecule type" value="Genomic_DNA"/>
</dbReference>
<dbReference type="RefSeq" id="YP_001293607.1">
    <property type="nucleotide sequence ID" value="NC_009573.1"/>
</dbReference>
<dbReference type="SMR" id="A6MW28"/>
<dbReference type="GeneID" id="5228675"/>
<dbReference type="GO" id="GO:0009507">
    <property type="term" value="C:chloroplast"/>
    <property type="evidence" value="ECO:0007669"/>
    <property type="project" value="UniProtKB-SubCell"/>
</dbReference>
<dbReference type="GO" id="GO:0005829">
    <property type="term" value="C:cytosol"/>
    <property type="evidence" value="ECO:0007669"/>
    <property type="project" value="TreeGrafter"/>
</dbReference>
<dbReference type="GO" id="GO:0005525">
    <property type="term" value="F:GTP binding"/>
    <property type="evidence" value="ECO:0007669"/>
    <property type="project" value="UniProtKB-UniRule"/>
</dbReference>
<dbReference type="GO" id="GO:0003924">
    <property type="term" value="F:GTPase activity"/>
    <property type="evidence" value="ECO:0007669"/>
    <property type="project" value="InterPro"/>
</dbReference>
<dbReference type="GO" id="GO:0003746">
    <property type="term" value="F:translation elongation factor activity"/>
    <property type="evidence" value="ECO:0007669"/>
    <property type="project" value="UniProtKB-UniRule"/>
</dbReference>
<dbReference type="CDD" id="cd01884">
    <property type="entry name" value="EF_Tu"/>
    <property type="match status" value="1"/>
</dbReference>
<dbReference type="CDD" id="cd03697">
    <property type="entry name" value="EFTU_II"/>
    <property type="match status" value="1"/>
</dbReference>
<dbReference type="CDD" id="cd03707">
    <property type="entry name" value="EFTU_III"/>
    <property type="match status" value="1"/>
</dbReference>
<dbReference type="FunFam" id="2.40.30.10:FF:000001">
    <property type="entry name" value="Elongation factor Tu"/>
    <property type="match status" value="1"/>
</dbReference>
<dbReference type="FunFam" id="2.40.30.10:FF:000046">
    <property type="entry name" value="Elongation factor Tu"/>
    <property type="match status" value="1"/>
</dbReference>
<dbReference type="FunFam" id="3.40.50.300:FF:000003">
    <property type="entry name" value="Elongation factor Tu"/>
    <property type="match status" value="1"/>
</dbReference>
<dbReference type="Gene3D" id="3.40.50.300">
    <property type="entry name" value="P-loop containing nucleotide triphosphate hydrolases"/>
    <property type="match status" value="1"/>
</dbReference>
<dbReference type="Gene3D" id="2.40.30.10">
    <property type="entry name" value="Translation factors"/>
    <property type="match status" value="2"/>
</dbReference>
<dbReference type="HAMAP" id="MF_00118_B">
    <property type="entry name" value="EF_Tu_B"/>
    <property type="match status" value="1"/>
</dbReference>
<dbReference type="InterPro" id="IPR041709">
    <property type="entry name" value="EF-Tu_GTP-bd"/>
</dbReference>
<dbReference type="InterPro" id="IPR050055">
    <property type="entry name" value="EF-Tu_GTPase"/>
</dbReference>
<dbReference type="InterPro" id="IPR004161">
    <property type="entry name" value="EFTu-like_2"/>
</dbReference>
<dbReference type="InterPro" id="IPR033720">
    <property type="entry name" value="EFTU_2"/>
</dbReference>
<dbReference type="InterPro" id="IPR031157">
    <property type="entry name" value="G_TR_CS"/>
</dbReference>
<dbReference type="InterPro" id="IPR027417">
    <property type="entry name" value="P-loop_NTPase"/>
</dbReference>
<dbReference type="InterPro" id="IPR005225">
    <property type="entry name" value="Small_GTP-bd"/>
</dbReference>
<dbReference type="InterPro" id="IPR000795">
    <property type="entry name" value="T_Tr_GTP-bd_dom"/>
</dbReference>
<dbReference type="InterPro" id="IPR009000">
    <property type="entry name" value="Transl_B-barrel_sf"/>
</dbReference>
<dbReference type="InterPro" id="IPR009001">
    <property type="entry name" value="Transl_elong_EF1A/Init_IF2_C"/>
</dbReference>
<dbReference type="InterPro" id="IPR004541">
    <property type="entry name" value="Transl_elong_EFTu/EF1A_bac/org"/>
</dbReference>
<dbReference type="InterPro" id="IPR004160">
    <property type="entry name" value="Transl_elong_EFTu/EF1A_C"/>
</dbReference>
<dbReference type="NCBIfam" id="TIGR00485">
    <property type="entry name" value="EF-Tu"/>
    <property type="match status" value="1"/>
</dbReference>
<dbReference type="NCBIfam" id="NF000766">
    <property type="entry name" value="PRK00049.1"/>
    <property type="match status" value="1"/>
</dbReference>
<dbReference type="NCBIfam" id="NF009372">
    <property type="entry name" value="PRK12735.1"/>
    <property type="match status" value="1"/>
</dbReference>
<dbReference type="NCBIfam" id="NF009373">
    <property type="entry name" value="PRK12736.1"/>
    <property type="match status" value="1"/>
</dbReference>
<dbReference type="NCBIfam" id="TIGR00231">
    <property type="entry name" value="small_GTP"/>
    <property type="match status" value="1"/>
</dbReference>
<dbReference type="PANTHER" id="PTHR43721:SF22">
    <property type="entry name" value="ELONGATION FACTOR TU, MITOCHONDRIAL"/>
    <property type="match status" value="1"/>
</dbReference>
<dbReference type="PANTHER" id="PTHR43721">
    <property type="entry name" value="ELONGATION FACTOR TU-RELATED"/>
    <property type="match status" value="1"/>
</dbReference>
<dbReference type="Pfam" id="PF00009">
    <property type="entry name" value="GTP_EFTU"/>
    <property type="match status" value="1"/>
</dbReference>
<dbReference type="Pfam" id="PF03144">
    <property type="entry name" value="GTP_EFTU_D2"/>
    <property type="match status" value="1"/>
</dbReference>
<dbReference type="Pfam" id="PF03143">
    <property type="entry name" value="GTP_EFTU_D3"/>
    <property type="match status" value="1"/>
</dbReference>
<dbReference type="PRINTS" id="PR00315">
    <property type="entry name" value="ELONGATNFCT"/>
</dbReference>
<dbReference type="SUPFAM" id="SSF50465">
    <property type="entry name" value="EF-Tu/eEF-1alpha/eIF2-gamma C-terminal domain"/>
    <property type="match status" value="1"/>
</dbReference>
<dbReference type="SUPFAM" id="SSF52540">
    <property type="entry name" value="P-loop containing nucleoside triphosphate hydrolases"/>
    <property type="match status" value="1"/>
</dbReference>
<dbReference type="SUPFAM" id="SSF50447">
    <property type="entry name" value="Translation proteins"/>
    <property type="match status" value="1"/>
</dbReference>
<dbReference type="PROSITE" id="PS00301">
    <property type="entry name" value="G_TR_1"/>
    <property type="match status" value="1"/>
</dbReference>
<dbReference type="PROSITE" id="PS51722">
    <property type="entry name" value="G_TR_2"/>
    <property type="match status" value="1"/>
</dbReference>
<gene>
    <name type="primary">tufA</name>
</gene>
<geneLocation type="chloroplast"/>
<protein>
    <recommendedName>
        <fullName>Elongation factor Tu, chloroplastic</fullName>
        <shortName>EF-Tu</shortName>
        <ecNumber evidence="2">3.6.5.3</ecNumber>
    </recommendedName>
</protein>
<feature type="chain" id="PRO_0000337598" description="Elongation factor Tu, chloroplastic">
    <location>
        <begin position="1"/>
        <end position="409"/>
    </location>
</feature>
<feature type="domain" description="tr-type G">
    <location>
        <begin position="10"/>
        <end position="214"/>
    </location>
</feature>
<feature type="region of interest" description="G1" evidence="1">
    <location>
        <begin position="19"/>
        <end position="26"/>
    </location>
</feature>
<feature type="region of interest" description="G2" evidence="1">
    <location>
        <begin position="60"/>
        <end position="64"/>
    </location>
</feature>
<feature type="region of interest" description="G3" evidence="1">
    <location>
        <begin position="81"/>
        <end position="84"/>
    </location>
</feature>
<feature type="region of interest" description="G4" evidence="1">
    <location>
        <begin position="136"/>
        <end position="139"/>
    </location>
</feature>
<feature type="region of interest" description="G5" evidence="1">
    <location>
        <begin position="174"/>
        <end position="176"/>
    </location>
</feature>
<feature type="binding site" evidence="1">
    <location>
        <begin position="19"/>
        <end position="26"/>
    </location>
    <ligand>
        <name>GTP</name>
        <dbReference type="ChEBI" id="CHEBI:37565"/>
    </ligand>
</feature>
<feature type="binding site" evidence="2">
    <location>
        <position position="26"/>
    </location>
    <ligand>
        <name>Mg(2+)</name>
        <dbReference type="ChEBI" id="CHEBI:18420"/>
    </ligand>
</feature>
<feature type="binding site" evidence="1">
    <location>
        <begin position="81"/>
        <end position="85"/>
    </location>
    <ligand>
        <name>GTP</name>
        <dbReference type="ChEBI" id="CHEBI:37565"/>
    </ligand>
</feature>
<feature type="binding site" evidence="1">
    <location>
        <begin position="136"/>
        <end position="139"/>
    </location>
    <ligand>
        <name>GTP</name>
        <dbReference type="ChEBI" id="CHEBI:37565"/>
    </ligand>
</feature>
<keyword id="KW-0150">Chloroplast</keyword>
<keyword id="KW-0251">Elongation factor</keyword>
<keyword id="KW-0342">GTP-binding</keyword>
<keyword id="KW-0378">Hydrolase</keyword>
<keyword id="KW-0460">Magnesium</keyword>
<keyword id="KW-0479">Metal-binding</keyword>
<keyword id="KW-0547">Nucleotide-binding</keyword>
<keyword id="KW-0934">Plastid</keyword>
<keyword id="KW-0648">Protein biosynthesis</keyword>
<proteinExistence type="inferred from homology"/>
<evidence type="ECO:0000250" key="1"/>
<evidence type="ECO:0000255" key="2">
    <source>
        <dbReference type="HAMAP-Rule" id="MF_00118"/>
    </source>
</evidence>
<evidence type="ECO:0000305" key="3"/>
<organism>
    <name type="scientific">Rhodomonas salina</name>
    <name type="common">Cryptomonas salina</name>
    <dbReference type="NCBI Taxonomy" id="52970"/>
    <lineage>
        <taxon>Eukaryota</taxon>
        <taxon>Cryptophyceae</taxon>
        <taxon>Pyrenomonadales</taxon>
        <taxon>Pyrenomonadaceae</taxon>
        <taxon>Rhodomonas</taxon>
    </lineage>
</organism>
<comment type="function">
    <text evidence="2">GTP hydrolase that promotes the GTP-dependent binding of aminoacyl-tRNA to the A-site of ribosomes during protein biosynthesis.</text>
</comment>
<comment type="catalytic activity">
    <reaction evidence="2">
        <text>GTP + H2O = GDP + phosphate + H(+)</text>
        <dbReference type="Rhea" id="RHEA:19669"/>
        <dbReference type="ChEBI" id="CHEBI:15377"/>
        <dbReference type="ChEBI" id="CHEBI:15378"/>
        <dbReference type="ChEBI" id="CHEBI:37565"/>
        <dbReference type="ChEBI" id="CHEBI:43474"/>
        <dbReference type="ChEBI" id="CHEBI:58189"/>
        <dbReference type="EC" id="3.6.5.3"/>
    </reaction>
    <physiologicalReaction direction="left-to-right" evidence="2">
        <dbReference type="Rhea" id="RHEA:19670"/>
    </physiologicalReaction>
</comment>
<comment type="subcellular location">
    <subcellularLocation>
        <location>Plastid</location>
        <location>Chloroplast</location>
    </subcellularLocation>
</comment>
<comment type="similarity">
    <text evidence="3">Belongs to the TRAFAC class translation factor GTPase superfamily. Classic translation factor GTPase family. EF-Tu/EF-1A subfamily.</text>
</comment>
<reference key="1">
    <citation type="journal article" date="2007" name="Mol. Biol. Evol.">
        <title>Plastid genome sequence of the cryptophyte alga Rhodomonas salina CCMP1319: lateral transfer of putative DNA replication machinery and a test of chromist plastid phylogeny.</title>
        <authorList>
            <person name="Khan H."/>
            <person name="Parks N."/>
            <person name="Kozera C."/>
            <person name="Curtis B.A."/>
            <person name="Parsons B.J."/>
            <person name="Bowman S."/>
            <person name="Archibald J.M."/>
        </authorList>
    </citation>
    <scope>NUCLEOTIDE SEQUENCE [LARGE SCALE GENOMIC DNA]</scope>
    <source>
        <strain>CCMP1319 / NEPCC76 / CS-174</strain>
    </source>
</reference>
<accession>A6MW28</accession>